<reference key="1">
    <citation type="journal article" date="2003" name="PLoS Biol.">
        <title>The genome sequence of Caenorhabditis briggsae: a platform for comparative genomics.</title>
        <authorList>
            <person name="Stein L.D."/>
            <person name="Bao Z."/>
            <person name="Blasiar D."/>
            <person name="Blumenthal T."/>
            <person name="Brent M.R."/>
            <person name="Chen N."/>
            <person name="Chinwalla A."/>
            <person name="Clarke L."/>
            <person name="Clee C."/>
            <person name="Coghlan A."/>
            <person name="Coulson A."/>
            <person name="D'Eustachio P."/>
            <person name="Fitch D.H.A."/>
            <person name="Fulton L.A."/>
            <person name="Fulton R.E."/>
            <person name="Griffiths-Jones S."/>
            <person name="Harris T.W."/>
            <person name="Hillier L.W."/>
            <person name="Kamath R."/>
            <person name="Kuwabara P.E."/>
            <person name="Mardis E.R."/>
            <person name="Marra M.A."/>
            <person name="Miner T.L."/>
            <person name="Minx P."/>
            <person name="Mullikin J.C."/>
            <person name="Plumb R.W."/>
            <person name="Rogers J."/>
            <person name="Schein J.E."/>
            <person name="Sohrmann M."/>
            <person name="Spieth J."/>
            <person name="Stajich J.E."/>
            <person name="Wei C."/>
            <person name="Willey D."/>
            <person name="Wilson R.K."/>
            <person name="Durbin R.M."/>
            <person name="Waterston R.H."/>
        </authorList>
    </citation>
    <scope>NUCLEOTIDE SEQUENCE [LARGE SCALE GENOMIC DNA]</scope>
    <source>
        <strain>AF16</strain>
    </source>
</reference>
<proteinExistence type="inferred from homology"/>
<evidence type="ECO:0000250" key="1">
    <source>
        <dbReference type="UniProtKB" id="P84077"/>
    </source>
</evidence>
<evidence type="ECO:0000250" key="2">
    <source>
        <dbReference type="UniProtKB" id="P84080"/>
    </source>
</evidence>
<evidence type="ECO:0000250" key="3">
    <source>
        <dbReference type="UniProtKB" id="Q10943"/>
    </source>
</evidence>
<evidence type="ECO:0000255" key="4"/>
<evidence type="ECO:0000305" key="5"/>
<protein>
    <recommendedName>
        <fullName>ADP-ribosylation factor 1-like 2</fullName>
        <ecNumber evidence="1">3.6.5.2</ecNumber>
    </recommendedName>
    <alternativeName>
        <fullName>ADP-ribosylation factor-related protein 1.2</fullName>
    </alternativeName>
</protein>
<accession>Q61LA8</accession>
<accession>A8X812</accession>
<feature type="initiator methionine" description="Removed" evidence="4">
    <location>
        <position position="1"/>
    </location>
</feature>
<feature type="chain" id="PRO_0000262960" description="ADP-ribosylation factor 1-like 2">
    <location>
        <begin position="2"/>
        <end position="181"/>
    </location>
</feature>
<feature type="region of interest" description="Important for the stable binding to the membranes" evidence="2">
    <location>
        <begin position="3"/>
        <end position="16"/>
    </location>
</feature>
<feature type="binding site" evidence="1">
    <location>
        <begin position="24"/>
        <end position="32"/>
    </location>
    <ligand>
        <name>GTP</name>
        <dbReference type="ChEBI" id="CHEBI:37565"/>
    </ligand>
</feature>
<feature type="binding site" evidence="1">
    <location>
        <begin position="126"/>
        <end position="129"/>
    </location>
    <ligand>
        <name>GTP</name>
        <dbReference type="ChEBI" id="CHEBI:37565"/>
    </ligand>
</feature>
<feature type="binding site" evidence="1">
    <location>
        <position position="160"/>
    </location>
    <ligand>
        <name>GTP</name>
        <dbReference type="ChEBI" id="CHEBI:37565"/>
    </ligand>
</feature>
<feature type="lipid moiety-binding region" description="N-myristoyl glycine" evidence="4">
    <location>
        <position position="2"/>
    </location>
</feature>
<comment type="function">
    <text evidence="1 3">Small GTPase involved in protein trafficking between different compartments. Modulates vesicle budding and uncoating within the Golgi complex. In its GTP-bound form, triggers the recruitment of coatomer proteins to the Golgi membrane. The hydrolysis of ARF1-bound GTP, which is mediated by ARFGAPs proteins, is required for dissociation of coat proteins from Golgi membranes and vesicles (By similarity). Involved in endoplasmic reticulum dynamics during embryogenesis. Also required for adult germline function. Plays a role in cell shedding during embryogenesis probably by promoting the endocytosis of cell adhesion molecules. During neurogenesis, involved in cell autonomous Q.p neuroblast asymmetric divisions that generate one precursor cell and one apoptotic cell, probably by controlling endocytosis. Plays a role in maintaining mitochondrial morphology (By similarity).</text>
</comment>
<comment type="catalytic activity">
    <reaction evidence="1">
        <text>GTP + H2O = GDP + phosphate + H(+)</text>
        <dbReference type="Rhea" id="RHEA:19669"/>
        <dbReference type="ChEBI" id="CHEBI:15377"/>
        <dbReference type="ChEBI" id="CHEBI:15378"/>
        <dbReference type="ChEBI" id="CHEBI:37565"/>
        <dbReference type="ChEBI" id="CHEBI:43474"/>
        <dbReference type="ChEBI" id="CHEBI:58189"/>
        <dbReference type="EC" id="3.6.5.2"/>
    </reaction>
</comment>
<comment type="activity regulation">
    <text evidence="1">Alternates between an inactive GDP-bound form and an active GTP-bound form (By similarity). Activated by a guanine nucleotide-exchange factor (GEF) and inactivated by GTPase-activating protein (GAP) (By similarity).</text>
</comment>
<comment type="subcellular location">
    <subcellularLocation>
        <location evidence="1">Golgi apparatus membrane</location>
        <topology evidence="1">Lipid-anchor</topology>
        <orientation evidence="5">Cytoplasmic side</orientation>
    </subcellularLocation>
    <text evidence="2">In the GDP-bound form, associates transiently with the membranes via its myristoylated N-terminus where guanine nucleotide-exchange factor (GEF)-mediated nucleotide exchange occurs (By similarity). Following nucleotide exchange, the GTP-bound form undergoes a conformational change, leading to the exposure of a myristoylated N-terminal amphipathic helix that provides stable membrane anchorage (By similarity).</text>
</comment>
<comment type="similarity">
    <text evidence="4">Belongs to the small GTPase superfamily. Arf family.</text>
</comment>
<sequence>MGNVFGSLFKGLFGKKEMRILMVGLDAAGKTTILYKLKLGEIVTTIPTIGFNVETVEYKNISFTVWDVGGQDKIRPLWRHYFQNTQGLIFVVDSNDRERVGEAREELMRMLAEDELRDAVLLVFANKQDLPQAMNAAEVTDKLGLHSLRNRSWYIQATCATSGDGLYEGLDWLSNQLKNRS</sequence>
<keyword id="KW-0931">ER-Golgi transport</keyword>
<keyword id="KW-0333">Golgi apparatus</keyword>
<keyword id="KW-0342">GTP-binding</keyword>
<keyword id="KW-0378">Hydrolase</keyword>
<keyword id="KW-0449">Lipoprotein</keyword>
<keyword id="KW-0472">Membrane</keyword>
<keyword id="KW-0519">Myristate</keyword>
<keyword id="KW-0547">Nucleotide-binding</keyword>
<keyword id="KW-0653">Protein transport</keyword>
<keyword id="KW-1185">Reference proteome</keyword>
<keyword id="KW-0813">Transport</keyword>
<dbReference type="EC" id="3.6.5.2" evidence="1"/>
<dbReference type="EMBL" id="HE601284">
    <property type="protein sequence ID" value="CAP28773.1"/>
    <property type="molecule type" value="Genomic_DNA"/>
</dbReference>
<dbReference type="SMR" id="Q61LA8"/>
<dbReference type="FunCoup" id="Q61LA8">
    <property type="interactions" value="3319"/>
</dbReference>
<dbReference type="STRING" id="6238.Q61LA8"/>
<dbReference type="EnsemblMetazoa" id="CBG09004.1">
    <property type="protein sequence ID" value="CBG09004.1"/>
    <property type="gene ID" value="WBGene00030680"/>
</dbReference>
<dbReference type="KEGG" id="cbr:CBG_09004"/>
<dbReference type="CTD" id="8583145"/>
<dbReference type="WormBase" id="CBG09004">
    <property type="protein sequence ID" value="CBP02198"/>
    <property type="gene ID" value="WBGene00030680"/>
    <property type="gene designation" value="Cbr-arf-1.2"/>
</dbReference>
<dbReference type="eggNOG" id="KOG0070">
    <property type="taxonomic scope" value="Eukaryota"/>
</dbReference>
<dbReference type="HOGENOM" id="CLU_040729_9_3_1"/>
<dbReference type="InParanoid" id="Q61LA8"/>
<dbReference type="OMA" id="HYYANTN"/>
<dbReference type="Proteomes" id="UP000008549">
    <property type="component" value="Unassembled WGS sequence"/>
</dbReference>
<dbReference type="GO" id="GO:0005737">
    <property type="term" value="C:cytoplasm"/>
    <property type="evidence" value="ECO:0000318"/>
    <property type="project" value="GO_Central"/>
</dbReference>
<dbReference type="GO" id="GO:0005783">
    <property type="term" value="C:endoplasmic reticulum"/>
    <property type="evidence" value="ECO:0007669"/>
    <property type="project" value="EnsemblMetazoa"/>
</dbReference>
<dbReference type="GO" id="GO:0000139">
    <property type="term" value="C:Golgi membrane"/>
    <property type="evidence" value="ECO:0007669"/>
    <property type="project" value="UniProtKB-SubCell"/>
</dbReference>
<dbReference type="GO" id="GO:0005886">
    <property type="term" value="C:plasma membrane"/>
    <property type="evidence" value="ECO:0000318"/>
    <property type="project" value="GO_Central"/>
</dbReference>
<dbReference type="GO" id="GO:0005525">
    <property type="term" value="F:GTP binding"/>
    <property type="evidence" value="ECO:0000318"/>
    <property type="project" value="GO_Central"/>
</dbReference>
<dbReference type="GO" id="GO:0003924">
    <property type="term" value="F:GTPase activity"/>
    <property type="evidence" value="ECO:0007669"/>
    <property type="project" value="InterPro"/>
</dbReference>
<dbReference type="GO" id="GO:0009792">
    <property type="term" value="P:embryo development ending in birth or egg hatching"/>
    <property type="evidence" value="ECO:0007669"/>
    <property type="project" value="EnsemblMetazoa"/>
</dbReference>
<dbReference type="GO" id="GO:0006886">
    <property type="term" value="P:intracellular protein transport"/>
    <property type="evidence" value="ECO:0000318"/>
    <property type="project" value="GO_Central"/>
</dbReference>
<dbReference type="GO" id="GO:0007005">
    <property type="term" value="P:mitochondrion organization"/>
    <property type="evidence" value="ECO:0007669"/>
    <property type="project" value="EnsemblMetazoa"/>
</dbReference>
<dbReference type="GO" id="GO:0048599">
    <property type="term" value="P:oocyte development"/>
    <property type="evidence" value="ECO:0007669"/>
    <property type="project" value="EnsemblMetazoa"/>
</dbReference>
<dbReference type="GO" id="GO:1904748">
    <property type="term" value="P:regulation of apoptotic process involved in development"/>
    <property type="evidence" value="ECO:0007669"/>
    <property type="project" value="EnsemblMetazoa"/>
</dbReference>
<dbReference type="GO" id="GO:0048259">
    <property type="term" value="P:regulation of receptor-mediated endocytosis"/>
    <property type="evidence" value="ECO:0007669"/>
    <property type="project" value="EnsemblMetazoa"/>
</dbReference>
<dbReference type="GO" id="GO:0016192">
    <property type="term" value="P:vesicle-mediated transport"/>
    <property type="evidence" value="ECO:0000318"/>
    <property type="project" value="GO_Central"/>
</dbReference>
<dbReference type="CDD" id="cd04150">
    <property type="entry name" value="Arf1_5_like"/>
    <property type="match status" value="1"/>
</dbReference>
<dbReference type="FunFam" id="3.40.50.300:FF:003500">
    <property type="entry name" value="ADP-ribosylation factor 1"/>
    <property type="match status" value="1"/>
</dbReference>
<dbReference type="Gene3D" id="3.40.50.300">
    <property type="entry name" value="P-loop containing nucleotide triphosphate hydrolases"/>
    <property type="match status" value="1"/>
</dbReference>
<dbReference type="InterPro" id="IPR045872">
    <property type="entry name" value="Arf1-5-like"/>
</dbReference>
<dbReference type="InterPro" id="IPR027417">
    <property type="entry name" value="P-loop_NTPase"/>
</dbReference>
<dbReference type="InterPro" id="IPR005225">
    <property type="entry name" value="Small_GTP-bd"/>
</dbReference>
<dbReference type="InterPro" id="IPR024156">
    <property type="entry name" value="Small_GTPase_ARF"/>
</dbReference>
<dbReference type="InterPro" id="IPR006689">
    <property type="entry name" value="Small_GTPase_ARF/SAR"/>
</dbReference>
<dbReference type="NCBIfam" id="TIGR00231">
    <property type="entry name" value="small_GTP"/>
    <property type="match status" value="1"/>
</dbReference>
<dbReference type="PANTHER" id="PTHR11711">
    <property type="entry name" value="ADP RIBOSYLATION FACTOR-RELATED"/>
    <property type="match status" value="1"/>
</dbReference>
<dbReference type="Pfam" id="PF00025">
    <property type="entry name" value="Arf"/>
    <property type="match status" value="1"/>
</dbReference>
<dbReference type="PRINTS" id="PR00328">
    <property type="entry name" value="SAR1GTPBP"/>
</dbReference>
<dbReference type="SMART" id="SM00177">
    <property type="entry name" value="ARF"/>
    <property type="match status" value="1"/>
</dbReference>
<dbReference type="SMART" id="SM00175">
    <property type="entry name" value="RAB"/>
    <property type="match status" value="1"/>
</dbReference>
<dbReference type="SMART" id="SM00178">
    <property type="entry name" value="SAR"/>
    <property type="match status" value="1"/>
</dbReference>
<dbReference type="SUPFAM" id="SSF52540">
    <property type="entry name" value="P-loop containing nucleoside triphosphate hydrolases"/>
    <property type="match status" value="1"/>
</dbReference>
<dbReference type="PROSITE" id="PS51417">
    <property type="entry name" value="ARF"/>
    <property type="match status" value="1"/>
</dbReference>
<organism>
    <name type="scientific">Caenorhabditis briggsae</name>
    <dbReference type="NCBI Taxonomy" id="6238"/>
    <lineage>
        <taxon>Eukaryota</taxon>
        <taxon>Metazoa</taxon>
        <taxon>Ecdysozoa</taxon>
        <taxon>Nematoda</taxon>
        <taxon>Chromadorea</taxon>
        <taxon>Rhabditida</taxon>
        <taxon>Rhabditina</taxon>
        <taxon>Rhabditomorpha</taxon>
        <taxon>Rhabditoidea</taxon>
        <taxon>Rhabditidae</taxon>
        <taxon>Peloderinae</taxon>
        <taxon>Caenorhabditis</taxon>
    </lineage>
</organism>
<gene>
    <name type="primary">arf-1.2</name>
    <name type="ORF">CBG09004</name>
</gene>
<name>ARF12_CAEBR</name>